<accession>A1JLV6</accession>
<proteinExistence type="inferred from homology"/>
<reference key="1">
    <citation type="journal article" date="2006" name="PLoS Genet.">
        <title>The complete genome sequence and comparative genome analysis of the high pathogenicity Yersinia enterocolitica strain 8081.</title>
        <authorList>
            <person name="Thomson N.R."/>
            <person name="Howard S."/>
            <person name="Wren B.W."/>
            <person name="Holden M.T.G."/>
            <person name="Crossman L."/>
            <person name="Challis G.L."/>
            <person name="Churcher C."/>
            <person name="Mungall K."/>
            <person name="Brooks K."/>
            <person name="Chillingworth T."/>
            <person name="Feltwell T."/>
            <person name="Abdellah Z."/>
            <person name="Hauser H."/>
            <person name="Jagels K."/>
            <person name="Maddison M."/>
            <person name="Moule S."/>
            <person name="Sanders M."/>
            <person name="Whitehead S."/>
            <person name="Quail M.A."/>
            <person name="Dougan G."/>
            <person name="Parkhill J."/>
            <person name="Prentice M.B."/>
        </authorList>
    </citation>
    <scope>NUCLEOTIDE SEQUENCE [LARGE SCALE GENOMIC DNA]</scope>
    <source>
        <strain>NCTC 13174 / 8081</strain>
    </source>
</reference>
<name>UVRC_YERE8</name>
<protein>
    <recommendedName>
        <fullName evidence="1">UvrABC system protein C</fullName>
        <shortName evidence="1">Protein UvrC</shortName>
    </recommendedName>
    <alternativeName>
        <fullName evidence="1">Excinuclease ABC subunit C</fullName>
    </alternativeName>
</protein>
<gene>
    <name evidence="1" type="primary">uvrC</name>
    <name type="ordered locus">YE1830</name>
</gene>
<organism>
    <name type="scientific">Yersinia enterocolitica serotype O:8 / biotype 1B (strain NCTC 13174 / 8081)</name>
    <dbReference type="NCBI Taxonomy" id="393305"/>
    <lineage>
        <taxon>Bacteria</taxon>
        <taxon>Pseudomonadati</taxon>
        <taxon>Pseudomonadota</taxon>
        <taxon>Gammaproteobacteria</taxon>
        <taxon>Enterobacterales</taxon>
        <taxon>Yersiniaceae</taxon>
        <taxon>Yersinia</taxon>
    </lineage>
</organism>
<feature type="chain" id="PRO_1000077859" description="UvrABC system protein C">
    <location>
        <begin position="1"/>
        <end position="610"/>
    </location>
</feature>
<feature type="domain" description="GIY-YIG" evidence="1">
    <location>
        <begin position="16"/>
        <end position="94"/>
    </location>
</feature>
<feature type="domain" description="UVR" evidence="1">
    <location>
        <begin position="204"/>
        <end position="239"/>
    </location>
</feature>
<sequence length="610" mass="68650">MTDCFDSKEFLKTVTSQPGVYRMYDKAGTVIYVGKAKDLKKRLTSYFRAHVASRKTETLVKNIAQIDVTVTHTETEALLLEHNYIKLYQPRYNVLLRDDKSYPLIFLSADKHPRLAIHRGAKHEKGEYFGPFPNSYAVRETLALLQKLFPVRQCENSVYRNRSRPCLQYQIGRCSGPCVPGLVSEEEYQRQVDYVRLFLSGKDQQVLTQLISRMEEASRLLHFEDAARIRDQIQAVRRVTEQQFVSGDSEDLDVIGVAFDAGLACVHVLFIRQGKVLGSRSYFPKVPAGTELSEVVQTFVGQFYLQGSQVRTLPGEILLDFTLAEKDLLASSLSELAGRKIQIQSRPRGDRARYLKLARTNASTALVTRLSQQSTIHQRMKELAKILNLDEINRMECFDISHTMGEQTVASCVVFDANGPVRSEYRRYNISGITPGDDYAAMSQVLKRRYGKALDDKKIPDVIFIDGGKGQLSQAFDVFASLNVPWDKQKPLLVGVAKGSDRKAGLETLFLAAEGEGFSLPPDSPALHLIQHIRDDSHHHAITGHRQRRSKVKNTSALELIEGVGPKRRQILLKYMGGLQPLLNASVEEIAKVPSISQALAEKIYNALKH</sequence>
<comment type="function">
    <text evidence="1">The UvrABC repair system catalyzes the recognition and processing of DNA lesions. UvrC both incises the 5' and 3' sides of the lesion. The N-terminal half is responsible for the 3' incision and the C-terminal half is responsible for the 5' incision.</text>
</comment>
<comment type="subunit">
    <text evidence="1">Interacts with UvrB in an incision complex.</text>
</comment>
<comment type="subcellular location">
    <subcellularLocation>
        <location evidence="1">Cytoplasm</location>
    </subcellularLocation>
</comment>
<comment type="similarity">
    <text evidence="1">Belongs to the UvrC family.</text>
</comment>
<keyword id="KW-0963">Cytoplasm</keyword>
<keyword id="KW-0227">DNA damage</keyword>
<keyword id="KW-0228">DNA excision</keyword>
<keyword id="KW-0234">DNA repair</keyword>
<keyword id="KW-0267">Excision nuclease</keyword>
<keyword id="KW-0742">SOS response</keyword>
<evidence type="ECO:0000255" key="1">
    <source>
        <dbReference type="HAMAP-Rule" id="MF_00203"/>
    </source>
</evidence>
<dbReference type="EMBL" id="AM286415">
    <property type="protein sequence ID" value="CAL11900.1"/>
    <property type="molecule type" value="Genomic_DNA"/>
</dbReference>
<dbReference type="RefSeq" id="WP_005170283.1">
    <property type="nucleotide sequence ID" value="NC_008800.1"/>
</dbReference>
<dbReference type="RefSeq" id="YP_001006097.1">
    <property type="nucleotide sequence ID" value="NC_008800.1"/>
</dbReference>
<dbReference type="SMR" id="A1JLV6"/>
<dbReference type="KEGG" id="yen:YE1830"/>
<dbReference type="PATRIC" id="fig|393305.7.peg.1982"/>
<dbReference type="eggNOG" id="COG0322">
    <property type="taxonomic scope" value="Bacteria"/>
</dbReference>
<dbReference type="HOGENOM" id="CLU_014841_3_2_6"/>
<dbReference type="OrthoDB" id="9804933at2"/>
<dbReference type="Proteomes" id="UP000000642">
    <property type="component" value="Chromosome"/>
</dbReference>
<dbReference type="GO" id="GO:0005737">
    <property type="term" value="C:cytoplasm"/>
    <property type="evidence" value="ECO:0007669"/>
    <property type="project" value="UniProtKB-SubCell"/>
</dbReference>
<dbReference type="GO" id="GO:0009380">
    <property type="term" value="C:excinuclease repair complex"/>
    <property type="evidence" value="ECO:0007669"/>
    <property type="project" value="InterPro"/>
</dbReference>
<dbReference type="GO" id="GO:0003677">
    <property type="term" value="F:DNA binding"/>
    <property type="evidence" value="ECO:0007669"/>
    <property type="project" value="UniProtKB-UniRule"/>
</dbReference>
<dbReference type="GO" id="GO:0009381">
    <property type="term" value="F:excinuclease ABC activity"/>
    <property type="evidence" value="ECO:0007669"/>
    <property type="project" value="UniProtKB-UniRule"/>
</dbReference>
<dbReference type="GO" id="GO:0006289">
    <property type="term" value="P:nucleotide-excision repair"/>
    <property type="evidence" value="ECO:0007669"/>
    <property type="project" value="UniProtKB-UniRule"/>
</dbReference>
<dbReference type="GO" id="GO:0009432">
    <property type="term" value="P:SOS response"/>
    <property type="evidence" value="ECO:0007669"/>
    <property type="project" value="UniProtKB-UniRule"/>
</dbReference>
<dbReference type="CDD" id="cd10434">
    <property type="entry name" value="GIY-YIG_UvrC_Cho"/>
    <property type="match status" value="1"/>
</dbReference>
<dbReference type="FunFam" id="1.10.150.20:FF:000005">
    <property type="entry name" value="UvrABC system protein C"/>
    <property type="match status" value="1"/>
</dbReference>
<dbReference type="FunFam" id="3.30.420.340:FF:000001">
    <property type="entry name" value="UvrABC system protein C"/>
    <property type="match status" value="1"/>
</dbReference>
<dbReference type="FunFam" id="3.40.1440.10:FF:000001">
    <property type="entry name" value="UvrABC system protein C"/>
    <property type="match status" value="1"/>
</dbReference>
<dbReference type="FunFam" id="4.10.860.10:FF:000002">
    <property type="entry name" value="UvrABC system protein C"/>
    <property type="match status" value="1"/>
</dbReference>
<dbReference type="Gene3D" id="1.10.150.20">
    <property type="entry name" value="5' to 3' exonuclease, C-terminal subdomain"/>
    <property type="match status" value="1"/>
</dbReference>
<dbReference type="Gene3D" id="3.40.1440.10">
    <property type="entry name" value="GIY-YIG endonuclease"/>
    <property type="match status" value="1"/>
</dbReference>
<dbReference type="Gene3D" id="4.10.860.10">
    <property type="entry name" value="UVR domain"/>
    <property type="match status" value="1"/>
</dbReference>
<dbReference type="Gene3D" id="3.30.420.340">
    <property type="entry name" value="UvrC, RNAse H endonuclease domain"/>
    <property type="match status" value="1"/>
</dbReference>
<dbReference type="HAMAP" id="MF_00203">
    <property type="entry name" value="UvrC"/>
    <property type="match status" value="1"/>
</dbReference>
<dbReference type="InterPro" id="IPR000305">
    <property type="entry name" value="GIY-YIG_endonuc"/>
</dbReference>
<dbReference type="InterPro" id="IPR035901">
    <property type="entry name" value="GIY-YIG_endonuc_sf"/>
</dbReference>
<dbReference type="InterPro" id="IPR047296">
    <property type="entry name" value="GIY-YIG_UvrC_Cho"/>
</dbReference>
<dbReference type="InterPro" id="IPR010994">
    <property type="entry name" value="RuvA_2-like"/>
</dbReference>
<dbReference type="InterPro" id="IPR001943">
    <property type="entry name" value="UVR_dom"/>
</dbReference>
<dbReference type="InterPro" id="IPR036876">
    <property type="entry name" value="UVR_dom_sf"/>
</dbReference>
<dbReference type="InterPro" id="IPR050066">
    <property type="entry name" value="UvrABC_protein_C"/>
</dbReference>
<dbReference type="InterPro" id="IPR004791">
    <property type="entry name" value="UvrC"/>
</dbReference>
<dbReference type="InterPro" id="IPR001162">
    <property type="entry name" value="UvrC_RNase_H_dom"/>
</dbReference>
<dbReference type="InterPro" id="IPR038476">
    <property type="entry name" value="UvrC_RNase_H_dom_sf"/>
</dbReference>
<dbReference type="NCBIfam" id="NF001824">
    <property type="entry name" value="PRK00558.1-5"/>
    <property type="match status" value="1"/>
</dbReference>
<dbReference type="NCBIfam" id="TIGR00194">
    <property type="entry name" value="uvrC"/>
    <property type="match status" value="1"/>
</dbReference>
<dbReference type="PANTHER" id="PTHR30562:SF1">
    <property type="entry name" value="UVRABC SYSTEM PROTEIN C"/>
    <property type="match status" value="1"/>
</dbReference>
<dbReference type="PANTHER" id="PTHR30562">
    <property type="entry name" value="UVRC/OXIDOREDUCTASE"/>
    <property type="match status" value="1"/>
</dbReference>
<dbReference type="Pfam" id="PF01541">
    <property type="entry name" value="GIY-YIG"/>
    <property type="match status" value="1"/>
</dbReference>
<dbReference type="Pfam" id="PF14520">
    <property type="entry name" value="HHH_5"/>
    <property type="match status" value="1"/>
</dbReference>
<dbReference type="Pfam" id="PF02151">
    <property type="entry name" value="UVR"/>
    <property type="match status" value="1"/>
</dbReference>
<dbReference type="Pfam" id="PF22920">
    <property type="entry name" value="UvrC_RNaseH"/>
    <property type="match status" value="1"/>
</dbReference>
<dbReference type="Pfam" id="PF08459">
    <property type="entry name" value="UvrC_RNaseH_dom"/>
    <property type="match status" value="1"/>
</dbReference>
<dbReference type="SMART" id="SM00465">
    <property type="entry name" value="GIYc"/>
    <property type="match status" value="1"/>
</dbReference>
<dbReference type="SUPFAM" id="SSF46600">
    <property type="entry name" value="C-terminal UvrC-binding domain of UvrB"/>
    <property type="match status" value="1"/>
</dbReference>
<dbReference type="SUPFAM" id="SSF82771">
    <property type="entry name" value="GIY-YIG endonuclease"/>
    <property type="match status" value="1"/>
</dbReference>
<dbReference type="SUPFAM" id="SSF47781">
    <property type="entry name" value="RuvA domain 2-like"/>
    <property type="match status" value="1"/>
</dbReference>
<dbReference type="PROSITE" id="PS50164">
    <property type="entry name" value="GIY_YIG"/>
    <property type="match status" value="1"/>
</dbReference>
<dbReference type="PROSITE" id="PS50151">
    <property type="entry name" value="UVR"/>
    <property type="match status" value="1"/>
</dbReference>
<dbReference type="PROSITE" id="PS50165">
    <property type="entry name" value="UVRC"/>
    <property type="match status" value="1"/>
</dbReference>